<evidence type="ECO:0000250" key="1">
    <source>
        <dbReference type="UniProtKB" id="Q9NYY8"/>
    </source>
</evidence>
<evidence type="ECO:0000255" key="2">
    <source>
        <dbReference type="PROSITE-ProRule" id="PRU00619"/>
    </source>
</evidence>
<evidence type="ECO:0000305" key="3"/>
<protein>
    <recommendedName>
        <fullName>FAST kinase domain-containing protein 2, mitochondrial</fullName>
    </recommendedName>
</protein>
<comment type="function">
    <text evidence="1">Plays an important role in assembly of the mitochondrial large ribosomal subunit. As a component of a functional protein-RNA module, consisting of RCC1L, NGRN, RPUSD3, RPUSD4, TRUB2, FASTKD2 and 16S mitochondrial ribosomal RNA (16S mt-rRNA), controls 16S mt-rRNA abundance and is required for intra-mitochondrial translation. May play a role in mitochondrial apoptosis.</text>
</comment>
<comment type="subunit">
    <text evidence="1">Monomer. Found in a complex with GRSF1, DDX28, DHX30 and FASTKD5. Associates with the 16S mitochondrial rRNA (16S mt-rRNA). Forms a regulatory protein-RNA complex, consisting of RCC1L, NGRN, RPUSD3, RPUSD4, TRUB2, FASTKD2 and 16S mt-rRNA.</text>
</comment>
<comment type="subcellular location">
    <subcellularLocation>
        <location evidence="1">Mitochondrion matrix</location>
    </subcellularLocation>
    <subcellularLocation>
        <location evidence="1">Mitochondrion matrix</location>
        <location evidence="1">Mitochondrion nucleoid</location>
    </subcellularLocation>
    <text evidence="1">Localizes to mitochondrial RNA granules found in close proximity to the mitochondrial nucleoids.</text>
</comment>
<comment type="similarity">
    <text evidence="3">Belongs to the FAST kinase family.</text>
</comment>
<dbReference type="EMBL" id="CR860242">
    <property type="protein sequence ID" value="CAH92384.1"/>
    <property type="molecule type" value="mRNA"/>
</dbReference>
<dbReference type="SMR" id="Q5R776"/>
<dbReference type="FunCoup" id="Q5R776">
    <property type="interactions" value="1721"/>
</dbReference>
<dbReference type="STRING" id="9601.ENSPPYP00000014655"/>
<dbReference type="eggNOG" id="ENOG502QVSD">
    <property type="taxonomic scope" value="Eukaryota"/>
</dbReference>
<dbReference type="InParanoid" id="Q5R776"/>
<dbReference type="Proteomes" id="UP000001595">
    <property type="component" value="Unplaced"/>
</dbReference>
<dbReference type="GO" id="GO:0042645">
    <property type="term" value="C:mitochondrial nucleoid"/>
    <property type="evidence" value="ECO:0000250"/>
    <property type="project" value="UniProtKB"/>
</dbReference>
<dbReference type="GO" id="GO:0005739">
    <property type="term" value="C:mitochondrion"/>
    <property type="evidence" value="ECO:0000250"/>
    <property type="project" value="UniProtKB"/>
</dbReference>
<dbReference type="GO" id="GO:0035770">
    <property type="term" value="C:ribonucleoprotein granule"/>
    <property type="evidence" value="ECO:0000250"/>
    <property type="project" value="UniProtKB"/>
</dbReference>
<dbReference type="GO" id="GO:0019843">
    <property type="term" value="F:rRNA binding"/>
    <property type="evidence" value="ECO:0000250"/>
    <property type="project" value="UniProtKB"/>
</dbReference>
<dbReference type="GO" id="GO:0006915">
    <property type="term" value="P:apoptotic process"/>
    <property type="evidence" value="ECO:0000250"/>
    <property type="project" value="UniProtKB"/>
</dbReference>
<dbReference type="GO" id="GO:1902775">
    <property type="term" value="P:mitochondrial large ribosomal subunit assembly"/>
    <property type="evidence" value="ECO:0000250"/>
    <property type="project" value="UniProtKB"/>
</dbReference>
<dbReference type="GO" id="GO:0000963">
    <property type="term" value="P:mitochondrial RNA processing"/>
    <property type="evidence" value="ECO:0007669"/>
    <property type="project" value="TreeGrafter"/>
</dbReference>
<dbReference type="GO" id="GO:0032543">
    <property type="term" value="P:mitochondrial translation"/>
    <property type="evidence" value="ECO:0000250"/>
    <property type="project" value="UniProtKB"/>
</dbReference>
<dbReference type="GO" id="GO:0070131">
    <property type="term" value="P:positive regulation of mitochondrial translation"/>
    <property type="evidence" value="ECO:0000250"/>
    <property type="project" value="UniProtKB"/>
</dbReference>
<dbReference type="GO" id="GO:0044528">
    <property type="term" value="P:regulation of mitochondrial mRNA stability"/>
    <property type="evidence" value="ECO:0007669"/>
    <property type="project" value="InterPro"/>
</dbReference>
<dbReference type="GO" id="GO:0006396">
    <property type="term" value="P:RNA processing"/>
    <property type="evidence" value="ECO:0000250"/>
    <property type="project" value="UniProtKB"/>
</dbReference>
<dbReference type="InterPro" id="IPR013579">
    <property type="entry name" value="FAST_2"/>
</dbReference>
<dbReference type="InterPro" id="IPR050870">
    <property type="entry name" value="FAST_kinase"/>
</dbReference>
<dbReference type="InterPro" id="IPR010622">
    <property type="entry name" value="FAST_Leu-rich"/>
</dbReference>
<dbReference type="InterPro" id="IPR013584">
    <property type="entry name" value="RAP"/>
</dbReference>
<dbReference type="PANTHER" id="PTHR21228:SF1">
    <property type="entry name" value="FAST KINASE DOMAIN-CONTAINING PROTEIN 2, MITOCHONDRIAL"/>
    <property type="match status" value="1"/>
</dbReference>
<dbReference type="PANTHER" id="PTHR21228">
    <property type="entry name" value="FAST LEU-RICH DOMAIN-CONTAINING"/>
    <property type="match status" value="1"/>
</dbReference>
<dbReference type="Pfam" id="PF06743">
    <property type="entry name" value="FAST_1"/>
    <property type="match status" value="1"/>
</dbReference>
<dbReference type="Pfam" id="PF08368">
    <property type="entry name" value="FAST_2"/>
    <property type="match status" value="1"/>
</dbReference>
<dbReference type="Pfam" id="PF08373">
    <property type="entry name" value="RAP"/>
    <property type="match status" value="1"/>
</dbReference>
<dbReference type="SMART" id="SM00952">
    <property type="entry name" value="RAP"/>
    <property type="match status" value="1"/>
</dbReference>
<dbReference type="PROSITE" id="PS51286">
    <property type="entry name" value="RAP"/>
    <property type="match status" value="1"/>
</dbReference>
<sequence length="693" mass="79834">MNNKADSFFWNLRQFSTLVPTSRTMRLYRLGLCKPKIVHSNWNILSNFHNRMRSTDIIRYLFQDAFIFKSDVGFQTKGISTLTARRIERLLYARRLFFDSKQSLVPVDKSDDGLKKVNLNHEVSNEDVLTKETKPNRISSRKLSQECNSLSDVLDAFSKAPTFPSSNYFTAMWTIAKRLSDGQKRFEKRLMFSHPAFNQLCEHMMREAKIMQYKYLLFSLYSMVKLGIPQNTILVQTLLRVTQERINECDETCLSVLSAVLEAMEPCKNVHVLQMGFRILVDQQVWKIEDVFTLQVVMKCIGKDAPIALKRKLEMKALRELDRFSVLNSQHMFEVLAAMNHRSLTLLDECSKVVLDNIHGCPLRIMINILQSCKDLQYHNLDLFKGLADYVAATFDIWKFRKVLFILILFENLGFRPVGLMDLFMKRIVEDPESLNMKNILPTLHTYSSLNHVYKCQNKEQFLEVMASALTGYLHTISSENLLHAVYSFCLMNYFPLAPFNQLLQKDVISELLTSDDMKNVYKLHMLDTCLKLDDTVYLKDIALSLPQLPRELPPSHPNAKVAEVLSSLLGGEGHFSKDVHLPHNYHIDFEIRMDTNRNQVLPLSDVDTTSATDIQRVAVLCVSRSAYCLGSSHPRGFLAMKMRHLNAMGFRVILVNNWEMDKLEMEDAVTFLKTKIYSVEALPVAAVNVQST</sequence>
<keyword id="KW-0496">Mitochondrion</keyword>
<keyword id="KW-1135">Mitochondrion nucleoid</keyword>
<keyword id="KW-0597">Phosphoprotein</keyword>
<keyword id="KW-1185">Reference proteome</keyword>
<keyword id="KW-0690">Ribosome biogenesis</keyword>
<keyword id="KW-0694">RNA-binding</keyword>
<keyword id="KW-0699">rRNA-binding</keyword>
<keyword id="KW-0809">Transit peptide</keyword>
<proteinExistence type="evidence at transcript level"/>
<organism>
    <name type="scientific">Pongo abelii</name>
    <name type="common">Sumatran orangutan</name>
    <name type="synonym">Pongo pygmaeus abelii</name>
    <dbReference type="NCBI Taxonomy" id="9601"/>
    <lineage>
        <taxon>Eukaryota</taxon>
        <taxon>Metazoa</taxon>
        <taxon>Chordata</taxon>
        <taxon>Craniata</taxon>
        <taxon>Vertebrata</taxon>
        <taxon>Euteleostomi</taxon>
        <taxon>Mammalia</taxon>
        <taxon>Eutheria</taxon>
        <taxon>Euarchontoglires</taxon>
        <taxon>Primates</taxon>
        <taxon>Haplorrhini</taxon>
        <taxon>Catarrhini</taxon>
        <taxon>Hominidae</taxon>
        <taxon>Pongo</taxon>
    </lineage>
</organism>
<accession>Q5R776</accession>
<reference key="1">
    <citation type="submission" date="2004-11" db="EMBL/GenBank/DDBJ databases">
        <authorList>
            <consortium name="The German cDNA consortium"/>
        </authorList>
    </citation>
    <scope>NUCLEOTIDE SEQUENCE [LARGE SCALE MRNA]</scope>
    <source>
        <tissue>Kidney</tissue>
    </source>
</reference>
<feature type="transit peptide" description="Mitochondrion" evidence="3">
    <location>
        <begin position="1"/>
        <end status="unknown"/>
    </location>
</feature>
<feature type="chain" id="PRO_0000050785" description="FAST kinase domain-containing protein 2, mitochondrial">
    <location>
        <begin status="unknown"/>
        <end position="693"/>
    </location>
</feature>
<feature type="domain" description="RAP" evidence="2">
    <location>
        <begin position="618"/>
        <end position="675"/>
    </location>
</feature>
<feature type="modified residue" description="Phosphoserine" evidence="1">
    <location>
        <position position="110"/>
    </location>
</feature>
<feature type="modified residue" description="Phosphoserine" evidence="1">
    <location>
        <position position="124"/>
    </location>
</feature>
<feature type="modified residue" description="Phosphoserine" evidence="1">
    <location>
        <position position="692"/>
    </location>
</feature>
<name>FAKD2_PONAB</name>
<gene>
    <name type="primary">FASTKD2</name>
</gene>